<sequence>MAISREKKTELINKYARHEGDTGSVEVQVAVLTEDINELNEHLRVHKKDFHSQRGLMKKIGHRRNLLAYLRKEDVNRYRDLIQSLGLRR</sequence>
<accession>Q88VD5</accession>
<accession>F9UQ70</accession>
<organism>
    <name type="scientific">Lactiplantibacillus plantarum (strain ATCC BAA-793 / NCIMB 8826 / WCFS1)</name>
    <name type="common">Lactobacillus plantarum</name>
    <dbReference type="NCBI Taxonomy" id="220668"/>
    <lineage>
        <taxon>Bacteria</taxon>
        <taxon>Bacillati</taxon>
        <taxon>Bacillota</taxon>
        <taxon>Bacilli</taxon>
        <taxon>Lactobacillales</taxon>
        <taxon>Lactobacillaceae</taxon>
        <taxon>Lactiplantibacillus</taxon>
    </lineage>
</organism>
<protein>
    <recommendedName>
        <fullName evidence="1">Small ribosomal subunit protein uS15</fullName>
    </recommendedName>
    <alternativeName>
        <fullName evidence="2">30S ribosomal protein S15</fullName>
    </alternativeName>
</protein>
<keyword id="KW-1185">Reference proteome</keyword>
<keyword id="KW-0687">Ribonucleoprotein</keyword>
<keyword id="KW-0689">Ribosomal protein</keyword>
<keyword id="KW-0694">RNA-binding</keyword>
<keyword id="KW-0699">rRNA-binding</keyword>
<gene>
    <name evidence="1" type="primary">rpsO</name>
    <name type="ordered locus">lp_2125</name>
</gene>
<name>RS15_LACPL</name>
<feature type="chain" id="PRO_0000115454" description="Small ribosomal subunit protein uS15">
    <location>
        <begin position="1"/>
        <end position="89"/>
    </location>
</feature>
<comment type="function">
    <text evidence="1">One of the primary rRNA binding proteins, it binds directly to 16S rRNA where it helps nucleate assembly of the platform of the 30S subunit by binding and bridging several RNA helices of the 16S rRNA.</text>
</comment>
<comment type="function">
    <text evidence="1">Forms an intersubunit bridge (bridge B4) with the 23S rRNA of the 50S subunit in the ribosome.</text>
</comment>
<comment type="subunit">
    <text evidence="1">Part of the 30S ribosomal subunit. Forms a bridge to the 50S subunit in the 70S ribosome, contacting the 23S rRNA.</text>
</comment>
<comment type="similarity">
    <text evidence="1">Belongs to the universal ribosomal protein uS15 family.</text>
</comment>
<dbReference type="EMBL" id="AL935263">
    <property type="protein sequence ID" value="CCC79359.1"/>
    <property type="molecule type" value="Genomic_DNA"/>
</dbReference>
<dbReference type="RefSeq" id="WP_003639022.1">
    <property type="nucleotide sequence ID" value="NC_004567.2"/>
</dbReference>
<dbReference type="RefSeq" id="YP_004889873.1">
    <property type="nucleotide sequence ID" value="NC_004567.2"/>
</dbReference>
<dbReference type="SMR" id="Q88VD5"/>
<dbReference type="STRING" id="220668.lp_2125"/>
<dbReference type="EnsemblBacteria" id="CCC79359">
    <property type="protein sequence ID" value="CCC79359"/>
    <property type="gene ID" value="lp_2125"/>
</dbReference>
<dbReference type="GeneID" id="89669400"/>
<dbReference type="KEGG" id="lpl:lp_2125"/>
<dbReference type="PATRIC" id="fig|220668.9.peg.1800"/>
<dbReference type="eggNOG" id="COG0184">
    <property type="taxonomic scope" value="Bacteria"/>
</dbReference>
<dbReference type="HOGENOM" id="CLU_148518_0_0_9"/>
<dbReference type="OrthoDB" id="9799262at2"/>
<dbReference type="PhylomeDB" id="Q88VD5"/>
<dbReference type="Proteomes" id="UP000000432">
    <property type="component" value="Chromosome"/>
</dbReference>
<dbReference type="GO" id="GO:0022627">
    <property type="term" value="C:cytosolic small ribosomal subunit"/>
    <property type="evidence" value="ECO:0007669"/>
    <property type="project" value="TreeGrafter"/>
</dbReference>
<dbReference type="GO" id="GO:0019843">
    <property type="term" value="F:rRNA binding"/>
    <property type="evidence" value="ECO:0007669"/>
    <property type="project" value="UniProtKB-UniRule"/>
</dbReference>
<dbReference type="GO" id="GO:0003735">
    <property type="term" value="F:structural constituent of ribosome"/>
    <property type="evidence" value="ECO:0007669"/>
    <property type="project" value="InterPro"/>
</dbReference>
<dbReference type="GO" id="GO:0006412">
    <property type="term" value="P:translation"/>
    <property type="evidence" value="ECO:0007669"/>
    <property type="project" value="UniProtKB-UniRule"/>
</dbReference>
<dbReference type="CDD" id="cd00353">
    <property type="entry name" value="Ribosomal_S15p_S13e"/>
    <property type="match status" value="1"/>
</dbReference>
<dbReference type="FunFam" id="1.10.287.10:FF:000002">
    <property type="entry name" value="30S ribosomal protein S15"/>
    <property type="match status" value="1"/>
</dbReference>
<dbReference type="Gene3D" id="6.10.250.3130">
    <property type="match status" value="1"/>
</dbReference>
<dbReference type="Gene3D" id="1.10.287.10">
    <property type="entry name" value="S15/NS1, RNA-binding"/>
    <property type="match status" value="1"/>
</dbReference>
<dbReference type="HAMAP" id="MF_01343_B">
    <property type="entry name" value="Ribosomal_uS15_B"/>
    <property type="match status" value="1"/>
</dbReference>
<dbReference type="InterPro" id="IPR000589">
    <property type="entry name" value="Ribosomal_uS15"/>
</dbReference>
<dbReference type="InterPro" id="IPR005290">
    <property type="entry name" value="Ribosomal_uS15_bac-type"/>
</dbReference>
<dbReference type="InterPro" id="IPR009068">
    <property type="entry name" value="uS15_NS1_RNA-bd_sf"/>
</dbReference>
<dbReference type="NCBIfam" id="TIGR00952">
    <property type="entry name" value="S15_bact"/>
    <property type="match status" value="1"/>
</dbReference>
<dbReference type="PANTHER" id="PTHR23321">
    <property type="entry name" value="RIBOSOMAL PROTEIN S15, BACTERIAL AND ORGANELLAR"/>
    <property type="match status" value="1"/>
</dbReference>
<dbReference type="PANTHER" id="PTHR23321:SF26">
    <property type="entry name" value="SMALL RIBOSOMAL SUBUNIT PROTEIN US15M"/>
    <property type="match status" value="1"/>
</dbReference>
<dbReference type="Pfam" id="PF00312">
    <property type="entry name" value="Ribosomal_S15"/>
    <property type="match status" value="1"/>
</dbReference>
<dbReference type="SMART" id="SM01387">
    <property type="entry name" value="Ribosomal_S15"/>
    <property type="match status" value="1"/>
</dbReference>
<dbReference type="SUPFAM" id="SSF47060">
    <property type="entry name" value="S15/NS1 RNA-binding domain"/>
    <property type="match status" value="1"/>
</dbReference>
<dbReference type="PROSITE" id="PS00362">
    <property type="entry name" value="RIBOSOMAL_S15"/>
    <property type="match status" value="1"/>
</dbReference>
<evidence type="ECO:0000255" key="1">
    <source>
        <dbReference type="HAMAP-Rule" id="MF_01343"/>
    </source>
</evidence>
<evidence type="ECO:0000305" key="2"/>
<proteinExistence type="inferred from homology"/>
<reference key="1">
    <citation type="journal article" date="2003" name="Proc. Natl. Acad. Sci. U.S.A.">
        <title>Complete genome sequence of Lactobacillus plantarum WCFS1.</title>
        <authorList>
            <person name="Kleerebezem M."/>
            <person name="Boekhorst J."/>
            <person name="van Kranenburg R."/>
            <person name="Molenaar D."/>
            <person name="Kuipers O.P."/>
            <person name="Leer R."/>
            <person name="Tarchini R."/>
            <person name="Peters S.A."/>
            <person name="Sandbrink H.M."/>
            <person name="Fiers M.W.E.J."/>
            <person name="Stiekema W."/>
            <person name="Klein Lankhorst R.M."/>
            <person name="Bron P.A."/>
            <person name="Hoffer S.M."/>
            <person name="Nierop Groot M.N."/>
            <person name="Kerkhoven R."/>
            <person name="De Vries M."/>
            <person name="Ursing B."/>
            <person name="De Vos W.M."/>
            <person name="Siezen R.J."/>
        </authorList>
    </citation>
    <scope>NUCLEOTIDE SEQUENCE [LARGE SCALE GENOMIC DNA]</scope>
    <source>
        <strain>ATCC BAA-793 / NCIMB 8826 / WCFS1</strain>
    </source>
</reference>
<reference key="2">
    <citation type="journal article" date="2012" name="J. Bacteriol.">
        <title>Complete resequencing and reannotation of the Lactobacillus plantarum WCFS1 genome.</title>
        <authorList>
            <person name="Siezen R.J."/>
            <person name="Francke C."/>
            <person name="Renckens B."/>
            <person name="Boekhorst J."/>
            <person name="Wels M."/>
            <person name="Kleerebezem M."/>
            <person name="van Hijum S.A."/>
        </authorList>
    </citation>
    <scope>NUCLEOTIDE SEQUENCE [LARGE SCALE GENOMIC DNA]</scope>
    <scope>GENOME REANNOTATION</scope>
    <source>
        <strain>ATCC BAA-793 / NCIMB 8826 / WCFS1</strain>
    </source>
</reference>